<evidence type="ECO:0000250" key="1"/>
<evidence type="ECO:0000255" key="2"/>
<evidence type="ECO:0000305" key="3"/>
<comment type="function">
    <text>Catalyzes the reaction which results in unsaturation at C-7 in the B ring of sterols.</text>
</comment>
<comment type="pathway">
    <text>Steroid metabolism; ergosterol biosynthesis; ergosterol from zymosterol: step 2/5.</text>
</comment>
<comment type="subcellular location">
    <subcellularLocation>
        <location evidence="1">Endoplasmic reticulum membrane</location>
        <topology evidence="1">Single-pass membrane protein</topology>
    </subcellularLocation>
</comment>
<comment type="similarity">
    <text evidence="3">Belongs to the ERG2 family.</text>
</comment>
<gene>
    <name type="primary">ERG2</name>
    <name type="ORF">UMAG_01934</name>
</gene>
<feature type="chain" id="PRO_0000087020" description="C-8 sterol isomerase">
    <location>
        <begin position="1"/>
        <end position="241"/>
    </location>
</feature>
<feature type="transmembrane region" description="Helical" evidence="2">
    <location>
        <begin position="23"/>
        <end position="43"/>
    </location>
</feature>
<reference key="1">
    <citation type="submission" date="1992-10" db="EMBL/GenBank/DDBJ databases">
        <title>Isolation and characterization of the ERG2 gene, encoding delta 8--&gt;delta 7 sterol isomerase, from the maize smut pathogen Ustilago maydis.</title>
        <authorList>
            <person name="Burden R.S."/>
            <person name="James C.S."/>
            <person name="Bailey A.M."/>
            <person name="Keon J.P."/>
            <person name="Croxon R."/>
            <person name="Bard M."/>
            <person name="Hargreaves J.A."/>
        </authorList>
    </citation>
    <scope>NUCLEOTIDE SEQUENCE [GENOMIC DNA]</scope>
    <source>
        <strain>IMI 103761</strain>
    </source>
</reference>
<reference key="2">
    <citation type="journal article" date="2006" name="Nature">
        <title>Insights from the genome of the biotrophic fungal plant pathogen Ustilago maydis.</title>
        <authorList>
            <person name="Kaemper J."/>
            <person name="Kahmann R."/>
            <person name="Boelker M."/>
            <person name="Ma L.-J."/>
            <person name="Brefort T."/>
            <person name="Saville B.J."/>
            <person name="Banuett F."/>
            <person name="Kronstad J.W."/>
            <person name="Gold S.E."/>
            <person name="Mueller O."/>
            <person name="Perlin M.H."/>
            <person name="Woesten H.A.B."/>
            <person name="de Vries R."/>
            <person name="Ruiz-Herrera J."/>
            <person name="Reynaga-Pena C.G."/>
            <person name="Snetselaar K."/>
            <person name="McCann M."/>
            <person name="Perez-Martin J."/>
            <person name="Feldbruegge M."/>
            <person name="Basse C.W."/>
            <person name="Steinberg G."/>
            <person name="Ibeas J.I."/>
            <person name="Holloman W."/>
            <person name="Guzman P."/>
            <person name="Farman M.L."/>
            <person name="Stajich J.E."/>
            <person name="Sentandreu R."/>
            <person name="Gonzalez-Prieto J.M."/>
            <person name="Kennell J.C."/>
            <person name="Molina L."/>
            <person name="Schirawski J."/>
            <person name="Mendoza-Mendoza A."/>
            <person name="Greilinger D."/>
            <person name="Muench K."/>
            <person name="Roessel N."/>
            <person name="Scherer M."/>
            <person name="Vranes M."/>
            <person name="Ladendorf O."/>
            <person name="Vincon V."/>
            <person name="Fuchs U."/>
            <person name="Sandrock B."/>
            <person name="Meng S."/>
            <person name="Ho E.C.H."/>
            <person name="Cahill M.J."/>
            <person name="Boyce K.J."/>
            <person name="Klose J."/>
            <person name="Klosterman S.J."/>
            <person name="Deelstra H.J."/>
            <person name="Ortiz-Castellanos L."/>
            <person name="Li W."/>
            <person name="Sanchez-Alonso P."/>
            <person name="Schreier P.H."/>
            <person name="Haeuser-Hahn I."/>
            <person name="Vaupel M."/>
            <person name="Koopmann E."/>
            <person name="Friedrich G."/>
            <person name="Voss H."/>
            <person name="Schlueter T."/>
            <person name="Margolis J."/>
            <person name="Platt D."/>
            <person name="Swimmer C."/>
            <person name="Gnirke A."/>
            <person name="Chen F."/>
            <person name="Vysotskaia V."/>
            <person name="Mannhaupt G."/>
            <person name="Gueldener U."/>
            <person name="Muensterkoetter M."/>
            <person name="Haase D."/>
            <person name="Oesterheld M."/>
            <person name="Mewes H.-W."/>
            <person name="Mauceli E.W."/>
            <person name="DeCaprio D."/>
            <person name="Wade C.M."/>
            <person name="Butler J."/>
            <person name="Young S.K."/>
            <person name="Jaffe D.B."/>
            <person name="Calvo S.E."/>
            <person name="Nusbaum C."/>
            <person name="Galagan J.E."/>
            <person name="Birren B.W."/>
        </authorList>
    </citation>
    <scope>NUCLEOTIDE SEQUENCE [LARGE SCALE GENOMIC DNA]</scope>
    <source>
        <strain>DSM 14603 / FGSC 9021 / UM521</strain>
    </source>
</reference>
<reference key="3">
    <citation type="submission" date="2014-09" db="EMBL/GenBank/DDBJ databases">
        <authorList>
            <person name="Gueldener U."/>
            <person name="Muensterkoetter M."/>
            <person name="Walter M.C."/>
            <person name="Mannhaupt G."/>
            <person name="Kahmann R."/>
        </authorList>
    </citation>
    <scope>GENOME REANNOTATION</scope>
    <source>
        <strain>DSM 14603 / FGSC 9021 / UM521</strain>
    </source>
</reference>
<dbReference type="EC" id="5.-.-.-"/>
<dbReference type="EMBL" id="Z17311">
    <property type="protein sequence ID" value="CAA78959.1"/>
    <property type="molecule type" value="Genomic_DNA"/>
</dbReference>
<dbReference type="EMBL" id="CM003142">
    <property type="protein sequence ID" value="KIS70782.1"/>
    <property type="molecule type" value="Genomic_DNA"/>
</dbReference>
<dbReference type="PIR" id="S29697">
    <property type="entry name" value="S29697"/>
</dbReference>
<dbReference type="RefSeq" id="XP_011387854.1">
    <property type="nucleotide sequence ID" value="XM_011389552.1"/>
</dbReference>
<dbReference type="SMR" id="P32360"/>
<dbReference type="FunCoup" id="P32360">
    <property type="interactions" value="155"/>
</dbReference>
<dbReference type="STRING" id="237631.P32360"/>
<dbReference type="EnsemblFungi" id="KIS70782">
    <property type="protein sequence ID" value="KIS70782"/>
    <property type="gene ID" value="UMAG_01934"/>
</dbReference>
<dbReference type="GeneID" id="23562800"/>
<dbReference type="KEGG" id="uma:UMAG_01934"/>
<dbReference type="VEuPathDB" id="FungiDB:UMAG_01934"/>
<dbReference type="eggNOG" id="KOG4143">
    <property type="taxonomic scope" value="Eukaryota"/>
</dbReference>
<dbReference type="HOGENOM" id="CLU_085469_0_0_1"/>
<dbReference type="InParanoid" id="P32360"/>
<dbReference type="OMA" id="ESEWMFN"/>
<dbReference type="OrthoDB" id="347124at2759"/>
<dbReference type="UniPathway" id="UPA00768">
    <property type="reaction ID" value="UER00761"/>
</dbReference>
<dbReference type="Proteomes" id="UP000000561">
    <property type="component" value="Chromosome 3"/>
</dbReference>
<dbReference type="GO" id="GO:0005783">
    <property type="term" value="C:endoplasmic reticulum"/>
    <property type="evidence" value="ECO:0000318"/>
    <property type="project" value="GO_Central"/>
</dbReference>
<dbReference type="GO" id="GO:0005789">
    <property type="term" value="C:endoplasmic reticulum membrane"/>
    <property type="evidence" value="ECO:0007669"/>
    <property type="project" value="UniProtKB-SubCell"/>
</dbReference>
<dbReference type="GO" id="GO:0016853">
    <property type="term" value="F:isomerase activity"/>
    <property type="evidence" value="ECO:0007669"/>
    <property type="project" value="UniProtKB-KW"/>
</dbReference>
<dbReference type="GO" id="GO:0006696">
    <property type="term" value="P:ergosterol biosynthetic process"/>
    <property type="evidence" value="ECO:0000318"/>
    <property type="project" value="GO_Central"/>
</dbReference>
<dbReference type="InterPro" id="IPR006716">
    <property type="entry name" value="ERG2_sigma1_rcpt-like"/>
</dbReference>
<dbReference type="PANTHER" id="PTHR10868">
    <property type="entry name" value="SIGMA 1-TYPE OPIOID RECEPTOR-RELATED"/>
    <property type="match status" value="1"/>
</dbReference>
<dbReference type="PANTHER" id="PTHR10868:SF1">
    <property type="entry name" value="SIGMA NON-OPIOID INTRACELLULAR RECEPTOR 1"/>
    <property type="match status" value="1"/>
</dbReference>
<dbReference type="Pfam" id="PF04622">
    <property type="entry name" value="ERG2_Sigma1R"/>
    <property type="match status" value="1"/>
</dbReference>
<keyword id="KW-0256">Endoplasmic reticulum</keyword>
<keyword id="KW-0413">Isomerase</keyword>
<keyword id="KW-0444">Lipid biosynthesis</keyword>
<keyword id="KW-0443">Lipid metabolism</keyword>
<keyword id="KW-0472">Membrane</keyword>
<keyword id="KW-1185">Reference proteome</keyword>
<keyword id="KW-0752">Steroid biosynthesis</keyword>
<keyword id="KW-0753">Steroid metabolism</keyword>
<keyword id="KW-0756">Sterol biosynthesis</keyword>
<keyword id="KW-1207">Sterol metabolism</keyword>
<keyword id="KW-0812">Transmembrane</keyword>
<keyword id="KW-1133">Transmembrane helix</keyword>
<name>ERG2_MYCMD</name>
<sequence length="241" mass="26265">MASHRPRSNKAANGASTSPKRSWIIVSAALVGFCALIAALDSIRSSFYIFDHKAIYKIASTAVANHPGNATAIFDDVLDNLRADPKLAPYINKNHFSDESEWMFNNAGGAMGSMFIIHASVTEYLIFFGTPVGTEGHTGRHTADDYFNILTGNQYAFPAGALKAEHYPAGSVHHLRRGTVKQYMMPEDGCWALELAQGWIPPMLPFGLADVLSSTLDLPTFGITVWITAREMVGNLLIGKF</sequence>
<organism>
    <name type="scientific">Mycosarcoma maydis</name>
    <name type="common">Corn smut fungus</name>
    <name type="synonym">Ustilago maydis</name>
    <dbReference type="NCBI Taxonomy" id="5270"/>
    <lineage>
        <taxon>Eukaryota</taxon>
        <taxon>Fungi</taxon>
        <taxon>Dikarya</taxon>
        <taxon>Basidiomycota</taxon>
        <taxon>Ustilaginomycotina</taxon>
        <taxon>Ustilaginomycetes</taxon>
        <taxon>Ustilaginales</taxon>
        <taxon>Ustilaginaceae</taxon>
        <taxon>Mycosarcoma</taxon>
    </lineage>
</organism>
<proteinExistence type="inferred from homology"/>
<accession>P32360</accession>
<accession>A0A0D1CC59</accession>
<accession>Q4PD79</accession>
<protein>
    <recommendedName>
        <fullName>C-8 sterol isomerase</fullName>
        <ecNumber>5.-.-.-</ecNumber>
    </recommendedName>
    <alternativeName>
        <fullName>Delta-8--delta-7 sterol isomerase</fullName>
    </alternativeName>
</protein>